<feature type="chain" id="PRO_0000046532" description="DNA polymerase">
    <location>
        <begin position="1"/>
        <end position="1006"/>
    </location>
</feature>
<feature type="strand" evidence="3">
    <location>
        <begin position="2"/>
        <end position="10"/>
    </location>
</feature>
<feature type="strand" evidence="3">
    <location>
        <begin position="13"/>
        <end position="15"/>
    </location>
</feature>
<feature type="strand" evidence="3">
    <location>
        <begin position="17"/>
        <end position="27"/>
    </location>
</feature>
<feature type="strand" evidence="3">
    <location>
        <begin position="29"/>
        <end position="35"/>
    </location>
</feature>
<feature type="strand" evidence="3">
    <location>
        <begin position="38"/>
        <end position="43"/>
    </location>
</feature>
<feature type="helix" evidence="3">
    <location>
        <begin position="44"/>
        <end position="48"/>
    </location>
</feature>
<feature type="strand" evidence="3">
    <location>
        <begin position="55"/>
        <end position="67"/>
    </location>
</feature>
<feature type="strand" evidence="3">
    <location>
        <begin position="72"/>
        <end position="76"/>
    </location>
</feature>
<feature type="strand" evidence="3">
    <location>
        <begin position="83"/>
        <end position="95"/>
    </location>
</feature>
<feature type="helix" evidence="3">
    <location>
        <begin position="109"/>
        <end position="116"/>
    </location>
</feature>
<feature type="strand" evidence="3">
    <location>
        <begin position="124"/>
        <end position="126"/>
    </location>
</feature>
<feature type="helix" evidence="3">
    <location>
        <begin position="129"/>
        <end position="131"/>
    </location>
</feature>
<feature type="strand" evidence="3">
    <location>
        <begin position="132"/>
        <end position="134"/>
    </location>
</feature>
<feature type="strand" evidence="3">
    <location>
        <begin position="136"/>
        <end position="143"/>
    </location>
</feature>
<feature type="helix" evidence="3">
    <location>
        <begin position="145"/>
        <end position="148"/>
    </location>
</feature>
<feature type="strand" evidence="3">
    <location>
        <begin position="151"/>
        <end position="153"/>
    </location>
</feature>
<feature type="strand" evidence="3">
    <location>
        <begin position="162"/>
        <end position="169"/>
    </location>
</feature>
<feature type="strand" evidence="3">
    <location>
        <begin position="172"/>
        <end position="174"/>
    </location>
</feature>
<feature type="turn" evidence="3">
    <location>
        <begin position="178"/>
        <end position="180"/>
    </location>
</feature>
<feature type="strand" evidence="3">
    <location>
        <begin position="183"/>
        <end position="191"/>
    </location>
</feature>
<feature type="strand" evidence="3">
    <location>
        <begin position="197"/>
        <end position="204"/>
    </location>
</feature>
<feature type="helix" evidence="3">
    <location>
        <begin position="205"/>
        <end position="207"/>
    </location>
</feature>
<feature type="helix" evidence="3">
    <location>
        <begin position="210"/>
        <end position="219"/>
    </location>
</feature>
<feature type="helix" evidence="3">
    <location>
        <begin position="227"/>
        <end position="229"/>
    </location>
</feature>
<feature type="strand" evidence="3">
    <location>
        <begin position="235"/>
        <end position="239"/>
    </location>
</feature>
<feature type="helix" evidence="3">
    <location>
        <begin position="241"/>
        <end position="253"/>
    </location>
</feature>
<feature type="strand" evidence="3">
    <location>
        <begin position="257"/>
        <end position="263"/>
    </location>
</feature>
<feature type="turn" evidence="3">
    <location>
        <begin position="264"/>
        <end position="267"/>
    </location>
</feature>
<feature type="helix" evidence="3">
    <location>
        <begin position="268"/>
        <end position="279"/>
    </location>
</feature>
<feature type="strand" evidence="3">
    <location>
        <begin position="285"/>
        <end position="287"/>
    </location>
</feature>
<feature type="strand" evidence="3">
    <location>
        <begin position="294"/>
        <end position="296"/>
    </location>
</feature>
<feature type="strand" evidence="3">
    <location>
        <begin position="300"/>
        <end position="303"/>
    </location>
</feature>
<feature type="strand" evidence="3">
    <location>
        <begin position="316"/>
        <end position="319"/>
    </location>
</feature>
<feature type="strand" evidence="3">
    <location>
        <begin position="327"/>
        <end position="330"/>
    </location>
</feature>
<feature type="helix" evidence="3">
    <location>
        <begin position="331"/>
        <end position="338"/>
    </location>
</feature>
<feature type="helix" evidence="3">
    <location>
        <begin position="346"/>
        <end position="353"/>
    </location>
</feature>
<feature type="strand" evidence="3">
    <location>
        <begin position="354"/>
        <end position="362"/>
    </location>
</feature>
<feature type="strand" evidence="3">
    <location>
        <begin position="368"/>
        <end position="373"/>
    </location>
</feature>
<feature type="turn" evidence="3">
    <location>
        <begin position="374"/>
        <end position="376"/>
    </location>
</feature>
<feature type="helix" evidence="3">
    <location>
        <begin position="381"/>
        <end position="389"/>
    </location>
</feature>
<feature type="strand" evidence="3">
    <location>
        <begin position="394"/>
        <end position="397"/>
    </location>
</feature>
<feature type="turn" evidence="3">
    <location>
        <begin position="398"/>
        <end position="400"/>
    </location>
</feature>
<feature type="strand" evidence="3">
    <location>
        <begin position="401"/>
        <end position="410"/>
    </location>
</feature>
<feature type="strand" evidence="3">
    <location>
        <begin position="415"/>
        <end position="419"/>
    </location>
</feature>
<feature type="strand" evidence="3">
    <location>
        <begin position="427"/>
        <end position="432"/>
    </location>
</feature>
<feature type="helix" evidence="3">
    <location>
        <begin position="440"/>
        <end position="445"/>
    </location>
</feature>
<feature type="helix" evidence="3">
    <location>
        <begin position="449"/>
        <end position="472"/>
    </location>
</feature>
<feature type="helix" evidence="3">
    <location>
        <begin position="475"/>
        <end position="486"/>
    </location>
</feature>
<feature type="turn" evidence="3">
    <location>
        <begin position="490"/>
        <end position="495"/>
    </location>
</feature>
<feature type="helix" evidence="3">
    <location>
        <begin position="498"/>
        <end position="501"/>
    </location>
</feature>
<feature type="helix" evidence="3">
    <location>
        <begin position="503"/>
        <end position="512"/>
    </location>
</feature>
<feature type="strand" evidence="3">
    <location>
        <begin position="515"/>
        <end position="518"/>
    </location>
</feature>
<feature type="strand" evidence="3">
    <location>
        <begin position="545"/>
        <end position="552"/>
    </location>
</feature>
<feature type="helix" evidence="3">
    <location>
        <begin position="553"/>
        <end position="561"/>
    </location>
</feature>
<feature type="turn" evidence="3">
    <location>
        <begin position="565"/>
        <end position="567"/>
    </location>
</feature>
<feature type="strand" evidence="3">
    <location>
        <begin position="568"/>
        <end position="576"/>
    </location>
</feature>
<feature type="helix" evidence="3">
    <location>
        <begin position="577"/>
        <end position="590"/>
    </location>
</feature>
<feature type="turn" evidence="3">
    <location>
        <begin position="593"/>
        <end position="595"/>
    </location>
</feature>
<feature type="strand" evidence="3">
    <location>
        <begin position="596"/>
        <end position="600"/>
    </location>
</feature>
<feature type="strand" evidence="3">
    <location>
        <begin position="609"/>
        <end position="616"/>
    </location>
</feature>
<feature type="helix" evidence="3">
    <location>
        <begin position="622"/>
        <end position="643"/>
    </location>
</feature>
<feature type="helix" evidence="3">
    <location>
        <begin position="647"/>
        <end position="671"/>
    </location>
</feature>
<feature type="strand" evidence="4">
    <location>
        <begin position="674"/>
        <end position="676"/>
    </location>
</feature>
<feature type="helix" evidence="3">
    <location>
        <begin position="681"/>
        <end position="702"/>
    </location>
</feature>
<feature type="strand" evidence="3">
    <location>
        <begin position="706"/>
        <end position="708"/>
    </location>
</feature>
<feature type="strand" evidence="3">
    <location>
        <begin position="711"/>
        <end position="713"/>
    </location>
</feature>
<feature type="strand" evidence="3">
    <location>
        <begin position="721"/>
        <end position="723"/>
    </location>
</feature>
<feature type="strand" evidence="3">
    <location>
        <begin position="732"/>
        <end position="734"/>
    </location>
</feature>
<feature type="strand" evidence="3">
    <location>
        <begin position="743"/>
        <end position="751"/>
    </location>
</feature>
<feature type="strand" evidence="3">
    <location>
        <begin position="754"/>
        <end position="760"/>
    </location>
</feature>
<feature type="helix" evidence="3">
    <location>
        <begin position="764"/>
        <end position="780"/>
    </location>
</feature>
<feature type="strand" evidence="3">
    <location>
        <begin position="789"/>
        <end position="814"/>
    </location>
</feature>
<feature type="strand" evidence="4">
    <location>
        <begin position="822"/>
        <end position="825"/>
    </location>
</feature>
<feature type="helix" evidence="3">
    <location>
        <begin position="837"/>
        <end position="855"/>
    </location>
</feature>
<feature type="helix" evidence="3">
    <location>
        <begin position="862"/>
        <end position="882"/>
    </location>
</feature>
<feature type="helix" evidence="3">
    <location>
        <begin position="887"/>
        <end position="890"/>
    </location>
</feature>
<feature type="strand" evidence="4">
    <location>
        <begin position="892"/>
        <end position="895"/>
    </location>
</feature>
<feature type="helix" evidence="3">
    <location>
        <begin position="905"/>
        <end position="917"/>
    </location>
</feature>
<feature type="strand" evidence="3">
    <location>
        <begin position="918"/>
        <end position="920"/>
    </location>
</feature>
<feature type="strand" evidence="3">
    <location>
        <begin position="930"/>
        <end position="935"/>
    </location>
</feature>
<feature type="turn" evidence="3">
    <location>
        <begin position="947"/>
        <end position="950"/>
    </location>
</feature>
<feature type="strand" evidence="3">
    <location>
        <begin position="951"/>
        <end position="953"/>
    </location>
</feature>
<feature type="strand" evidence="3">
    <location>
        <begin position="964"/>
        <end position="966"/>
    </location>
</feature>
<feature type="helix" evidence="3">
    <location>
        <begin position="968"/>
        <end position="980"/>
    </location>
</feature>
<feature type="helix" evidence="3">
    <location>
        <begin position="986"/>
        <end position="997"/>
    </location>
</feature>
<sequence length="1006" mass="116903">MDVRCINWFESHGENRFLYLKSRCRNGETVFIRFPHYFYYVVTDEIYQSLSPPPFNARPLGKMRTIDIDETISYNLDIKDRKCSVADMWLIEEPKKRSIQNATMDEFLNISWFYISNGISPDGCYSLDEQYLTKINNGCYHCDDPRNCFAKKIPRFDIPRSYLFLDIECHFDKKFPSVFINPISHTSYCYIDLSGKRLLFTLINEEMLTEQEIQEAVDRGCLRIQSLMEMDYERELVLCSEIVLLRIAKQLLELTFDYVVTFNGHNFDLRYITNRLELLTGEKIIFRSPDKKEAVHLCIYERNQSSHKGVGGMANTTFHVNNNNGTIFFDLYSFIQKSEKLDSYKLDSISKNAFSCMGKVLNRGVREMTFIGDDTTDAKGKAAAFAKVLTTGNYVTVDEDIICKVIRKDIWENGFKVVLLCPTLPNDTYKLSFGKDDVDLAQMYKDYNLNIALDMARYCIHDACLCQYLWEYYGVETKTDAGASTYVLPQSMVFEYRASTVIKGPLLKLLLETKTILVRSETKQKFPYEGGKVFAPKQKMFSNNVLIFDYNSLYPNVCIFGNLSPETLVGVVVSTNRLEEEINNQLLLQKYPPPRYITVHCEPRLPNLISEIAIFDRSIEGTIPRLLRTFLAERARYKKMLKQATSSTEKAIYDSMQYTYKIVANSVYGLMGFRNSALYSYASAKSCTSIGRRMILYLESVLNGAELSNGMLRFANPLSNPFYMDDRDINPIVKTSLPIDYRFRFRSVYGDTDSVFTEIDSQDVDKSIEIAKELERLINNRVLFNNFKIEFEAVYKNLIMQSKKKYTTMKYSASSNSKSVPERINKGTSETRRDVSKFHKNMIKTYKTRLSEMLSEGRMNSNQVCIDILRSLETDLRSEFDSRSSPLELFMLSRMHHSNYKSADNPNMYLVTEYNKNNPETIELGERYYFAYICPANVPWTKKLVNIKTYETIIDRSFKLGSDQRIFYEVYFKRLTSEIVNLLDNKVLCISFFERMFGSKPTFYEA</sequence>
<protein>
    <recommendedName>
        <fullName>DNA polymerase</fullName>
        <ecNumber>2.7.7.7</ecNumber>
    </recommendedName>
    <domain>
        <recommendedName>
            <fullName>3'-5' exodeoxyribonuclease</fullName>
            <shortName>3'-5' exonuclease</shortName>
            <ecNumber>3.1.11.-</ecNumber>
        </recommendedName>
    </domain>
</protein>
<comment type="function">
    <text evidence="1">Catalyzes DNA synthesis. Acquires processivity by associating with a heterodimeric processivity factor comprised of the viral OPG148 and OPG116 proteins, thereby forming the DNA polymerase holoenzyme. Displays 3'- to 5' exonuclease activity. Might participate in viral DNA recombination. Does not perform OPG116/D4synthesis across an abasic site.</text>
</comment>
<comment type="catalytic activity">
    <reaction evidence="1">
        <text>DNA(n) + a 2'-deoxyribonucleoside 5'-triphosphate = DNA(n+1) + diphosphate</text>
        <dbReference type="Rhea" id="RHEA:22508"/>
        <dbReference type="Rhea" id="RHEA-COMP:17339"/>
        <dbReference type="Rhea" id="RHEA-COMP:17340"/>
        <dbReference type="ChEBI" id="CHEBI:33019"/>
        <dbReference type="ChEBI" id="CHEBI:61560"/>
        <dbReference type="ChEBI" id="CHEBI:173112"/>
        <dbReference type="EC" id="2.7.7.7"/>
    </reaction>
</comment>
<comment type="subunit">
    <text evidence="1">Interacts with OPG148. Component of the Uracil-DNA glycosylase(UDG)-OPG148-polymerase complex; OPG148 and OPG116/UDG form a heterodimeric processivity factor that associates with OPG071 to form the processive polymerase holoenzyme.</text>
</comment>
<comment type="induction">
    <text evidence="1">Expressed in the early phase of the viral replicative cycle.</text>
</comment>
<comment type="similarity">
    <text evidence="2">Belongs to the DNA polymerase type-B family.</text>
</comment>
<reference key="1">
    <citation type="journal article" date="1990" name="Virology">
        <title>The complete DNA sequence of vaccinia virus.</title>
        <authorList>
            <person name="Goebel S.J."/>
            <person name="Johnson G.P."/>
            <person name="Perkus M.E."/>
            <person name="Davis S.W."/>
            <person name="Winslow J.P."/>
            <person name="Paoletti E."/>
        </authorList>
    </citation>
    <scope>NUCLEOTIDE SEQUENCE [LARGE SCALE GENOMIC DNA]</scope>
</reference>
<reference key="2">
    <citation type="journal article" date="1990" name="Virology">
        <title>Appendix to 'The complete DNA sequence of vaccinia virus'.</title>
        <authorList>
            <person name="Goebel S.J."/>
            <person name="Johnson G.P."/>
            <person name="Perkus M.E."/>
            <person name="Davis S.W."/>
            <person name="Winslow J.P."/>
            <person name="Paoletti E."/>
        </authorList>
    </citation>
    <scope>NUCLEOTIDE SEQUENCE [LARGE SCALE GENOMIC DNA]</scope>
</reference>
<dbReference type="EC" id="2.7.7.7"/>
<dbReference type="EC" id="3.1.11.-"/>
<dbReference type="EMBL" id="M35027">
    <property type="protein sequence ID" value="AAA48049.1"/>
    <property type="molecule type" value="Genomic_DNA"/>
</dbReference>
<dbReference type="PIR" id="D42509">
    <property type="entry name" value="DJVZ4I"/>
</dbReference>
<dbReference type="PDB" id="5N2E">
    <property type="method" value="X-ray"/>
    <property type="resolution" value="2.74 A"/>
    <property type="chains" value="A=2-1006"/>
</dbReference>
<dbReference type="PDB" id="5N2G">
    <property type="method" value="X-ray"/>
    <property type="resolution" value="2.78 A"/>
    <property type="chains" value="A=2-1005"/>
</dbReference>
<dbReference type="PDB" id="5N2H">
    <property type="method" value="X-ray"/>
    <property type="resolution" value="2.81 A"/>
    <property type="chains" value="A=2-1005"/>
</dbReference>
<dbReference type="PDB" id="8Q3R">
    <property type="method" value="EM"/>
    <property type="resolution" value="3.80 A"/>
    <property type="chains" value="E=2-1006"/>
</dbReference>
<dbReference type="PDBsum" id="5N2E"/>
<dbReference type="PDBsum" id="5N2G"/>
<dbReference type="PDBsum" id="5N2H"/>
<dbReference type="PDBsum" id="8Q3R"/>
<dbReference type="EMDB" id="EMD-18134"/>
<dbReference type="SASBDB" id="P20509"/>
<dbReference type="SMR" id="P20509"/>
<dbReference type="IntAct" id="P20509">
    <property type="interactions" value="1"/>
</dbReference>
<dbReference type="Proteomes" id="UP000008269">
    <property type="component" value="Segment"/>
</dbReference>
<dbReference type="GO" id="GO:0003677">
    <property type="term" value="F:DNA binding"/>
    <property type="evidence" value="ECO:0007669"/>
    <property type="project" value="UniProtKB-KW"/>
</dbReference>
<dbReference type="GO" id="GO:0003887">
    <property type="term" value="F:DNA-directed DNA polymerase activity"/>
    <property type="evidence" value="ECO:0007669"/>
    <property type="project" value="UniProtKB-KW"/>
</dbReference>
<dbReference type="GO" id="GO:0016787">
    <property type="term" value="F:hydrolase activity"/>
    <property type="evidence" value="ECO:0007669"/>
    <property type="project" value="UniProtKB-KW"/>
</dbReference>
<dbReference type="GO" id="GO:0000166">
    <property type="term" value="F:nucleotide binding"/>
    <property type="evidence" value="ECO:0007669"/>
    <property type="project" value="InterPro"/>
</dbReference>
<dbReference type="GO" id="GO:0006310">
    <property type="term" value="P:DNA recombination"/>
    <property type="evidence" value="ECO:0007669"/>
    <property type="project" value="UniProtKB-KW"/>
</dbReference>
<dbReference type="GO" id="GO:0006260">
    <property type="term" value="P:DNA replication"/>
    <property type="evidence" value="ECO:0007669"/>
    <property type="project" value="UniProtKB-KW"/>
</dbReference>
<dbReference type="GO" id="GO:0039693">
    <property type="term" value="P:viral DNA genome replication"/>
    <property type="evidence" value="ECO:0007669"/>
    <property type="project" value="UniProtKB-KW"/>
</dbReference>
<dbReference type="FunFam" id="1.10.287.690:FF:000010">
    <property type="entry name" value="DNA polymerase"/>
    <property type="match status" value="1"/>
</dbReference>
<dbReference type="Gene3D" id="1.10.287.690">
    <property type="entry name" value="Helix hairpin bin"/>
    <property type="match status" value="1"/>
</dbReference>
<dbReference type="Gene3D" id="3.90.1600.10">
    <property type="entry name" value="Palm domain of DNA polymerase"/>
    <property type="match status" value="2"/>
</dbReference>
<dbReference type="Gene3D" id="3.30.420.10">
    <property type="entry name" value="Ribonuclease H-like superfamily/Ribonuclease H"/>
    <property type="match status" value="1"/>
</dbReference>
<dbReference type="InterPro" id="IPR006172">
    <property type="entry name" value="DNA-dir_DNA_pol_B"/>
</dbReference>
<dbReference type="InterPro" id="IPR017964">
    <property type="entry name" value="DNA-dir_DNA_pol_B_CS"/>
</dbReference>
<dbReference type="InterPro" id="IPR006133">
    <property type="entry name" value="DNA-dir_DNA_pol_B_exonuc"/>
</dbReference>
<dbReference type="InterPro" id="IPR006134">
    <property type="entry name" value="DNA-dir_DNA_pol_B_multi_dom"/>
</dbReference>
<dbReference type="InterPro" id="IPR013617">
    <property type="entry name" value="DNA-dir_DNA_pol_B_vir_insert"/>
</dbReference>
<dbReference type="InterPro" id="IPR043502">
    <property type="entry name" value="DNA/RNA_pol_sf"/>
</dbReference>
<dbReference type="InterPro" id="IPR023211">
    <property type="entry name" value="DNA_pol_palm_dom_sf"/>
</dbReference>
<dbReference type="InterPro" id="IPR050240">
    <property type="entry name" value="DNA_pol_type-B"/>
</dbReference>
<dbReference type="InterPro" id="IPR013660">
    <property type="entry name" value="DNApol_B_exo_N"/>
</dbReference>
<dbReference type="InterPro" id="IPR012337">
    <property type="entry name" value="RNaseH-like_sf"/>
</dbReference>
<dbReference type="InterPro" id="IPR036397">
    <property type="entry name" value="RNaseH_sf"/>
</dbReference>
<dbReference type="PANTHER" id="PTHR10322">
    <property type="entry name" value="DNA POLYMERASE CATALYTIC SUBUNIT"/>
    <property type="match status" value="1"/>
</dbReference>
<dbReference type="PANTHER" id="PTHR10322:SF23">
    <property type="entry name" value="DNA POLYMERASE DELTA CATALYTIC SUBUNIT"/>
    <property type="match status" value="1"/>
</dbReference>
<dbReference type="Pfam" id="PF00136">
    <property type="entry name" value="DNA_pol_B"/>
    <property type="match status" value="1"/>
</dbReference>
<dbReference type="Pfam" id="PF08408">
    <property type="entry name" value="DNA_pol_B_3"/>
    <property type="match status" value="1"/>
</dbReference>
<dbReference type="Pfam" id="PF03104">
    <property type="entry name" value="DNA_pol_B_exo1"/>
    <property type="match status" value="1"/>
</dbReference>
<dbReference type="Pfam" id="PF08452">
    <property type="entry name" value="DNAP_B_exo_N"/>
    <property type="match status" value="1"/>
</dbReference>
<dbReference type="PRINTS" id="PR00106">
    <property type="entry name" value="DNAPOLB"/>
</dbReference>
<dbReference type="SMART" id="SM00486">
    <property type="entry name" value="POLBc"/>
    <property type="match status" value="1"/>
</dbReference>
<dbReference type="SUPFAM" id="SSF56672">
    <property type="entry name" value="DNA/RNA polymerases"/>
    <property type="match status" value="1"/>
</dbReference>
<dbReference type="SUPFAM" id="SSF53098">
    <property type="entry name" value="Ribonuclease H-like"/>
    <property type="match status" value="1"/>
</dbReference>
<dbReference type="PROSITE" id="PS00116">
    <property type="entry name" value="DNA_POLYMERASE_B"/>
    <property type="match status" value="1"/>
</dbReference>
<organismHost>
    <name type="scientific">Homo sapiens</name>
    <name type="common">Human</name>
    <dbReference type="NCBI Taxonomy" id="9606"/>
</organismHost>
<name>DPOL_VACCC</name>
<gene>
    <name type="primary">OPG071</name>
    <name type="synonym">POL</name>
    <name type="ORF">E9L</name>
</gene>
<proteinExistence type="evidence at protein level"/>
<evidence type="ECO:0000250" key="1">
    <source>
        <dbReference type="UniProtKB" id="P06856"/>
    </source>
</evidence>
<evidence type="ECO:0000305" key="2"/>
<evidence type="ECO:0007829" key="3">
    <source>
        <dbReference type="PDB" id="5N2E"/>
    </source>
</evidence>
<evidence type="ECO:0007829" key="4">
    <source>
        <dbReference type="PDB" id="5N2G"/>
    </source>
</evidence>
<keyword id="KW-0002">3D-structure</keyword>
<keyword id="KW-0233">DNA recombination</keyword>
<keyword id="KW-0235">DNA replication</keyword>
<keyword id="KW-0238">DNA-binding</keyword>
<keyword id="KW-0239">DNA-directed DNA polymerase</keyword>
<keyword id="KW-0244">Early protein</keyword>
<keyword id="KW-0378">Hydrolase</keyword>
<keyword id="KW-0511">Multifunctional enzyme</keyword>
<keyword id="KW-0548">Nucleotidyltransferase</keyword>
<keyword id="KW-1185">Reference proteome</keyword>
<keyword id="KW-0808">Transferase</keyword>
<keyword id="KW-1194">Viral DNA replication</keyword>
<organism>
    <name type="scientific">Vaccinia virus (strain Copenhagen)</name>
    <name type="common">VACV</name>
    <dbReference type="NCBI Taxonomy" id="10249"/>
    <lineage>
        <taxon>Viruses</taxon>
        <taxon>Varidnaviria</taxon>
        <taxon>Bamfordvirae</taxon>
        <taxon>Nucleocytoviricota</taxon>
        <taxon>Pokkesviricetes</taxon>
        <taxon>Chitovirales</taxon>
        <taxon>Poxviridae</taxon>
        <taxon>Chordopoxvirinae</taxon>
        <taxon>Orthopoxvirus</taxon>
        <taxon>Vaccinia virus</taxon>
    </lineage>
</organism>
<accession>P20509</accession>